<protein>
    <recommendedName>
        <fullName>U1 small nuclear ribonucleoprotein component SNU71</fullName>
    </recommendedName>
</protein>
<comment type="function">
    <text evidence="5">Component of the U1 snRNP particle, which recognizes and binds the 5'-splice site of pre-mRNA. Together with other non-snRNP factors, U1 snRNP forms the spliceosomal commitment complex, that targets pre-mRNA to the splicing pathway.</text>
</comment>
<comment type="subunit">
    <text evidence="3 4 8">Component of the 18S U1 snRNP particle, a subcomplex of the spliceosome.</text>
</comment>
<comment type="subcellular location">
    <subcellularLocation>
        <location evidence="6">Cytoplasm</location>
    </subcellularLocation>
    <subcellularLocation>
        <location evidence="6">Nucleus</location>
    </subcellularLocation>
</comment>
<comment type="miscellaneous">
    <text evidence="7">Present with 782 molecules/cell in log phase SD medium.</text>
</comment>
<comment type="similarity">
    <text evidence="9">Belongs to the SNU71 family.</text>
</comment>
<accession>P53207</accession>
<accession>D6VUE9</accession>
<proteinExistence type="evidence at protein level"/>
<name>SNU71_YEAST</name>
<sequence>MRDIVFVSPQLYLSSQEGWKSDSAKSGFIPILKNDLQRFQDSLKHIVDARNSLSETLLNSNDDGSIHNSDQNTGLNKDKEASIADNNSANKCATSSSRYQELKQFLPISLDQQIHTVSLQGVSSSFSRGQIESLLDHCLNLALTETQSNSALKVEAWSSFSSFLDTQDIFIRFSKVDEDEAFVNTLNYCKALFAFIRKLHEDFKIELHLDLNTKEYVEDRTGTIPSVKPEKASEFYSVFKNIEDQTDERNSKKEQLDDSSTQYKVDTNTLSDLPSDALDQLCKDIIEFRTKVVSIEKEKKMKSTYEESRRQRHQMQKVFDQIRKNHSGAKGSANTEEEDTNMEDEDEEDDTEDDLALEKRKEERDLEESNRRYEDMLHQLHSNTEPKIKSIRADIMSAENYEEHLEKNRSLYLKELLHLANDVHYDHHRSFKEQEERRDEEDRAKNGNAKELAPIQLSDGKAISAGKAAAITLPEGTVKSENYNADKNVSESSEHVKIKFDFKKAIDHSVESSSEDEGYRESELPPTKPSERSAAEDRLPFTADELNIRLTNLKESRYVDELVREFLGVYEDELVEYILENIRVNQSKQALLNELRETFDEDGETIADRLWSRKEFRLGT</sequence>
<gene>
    <name type="primary">SNU71</name>
    <name type="ordered locus">YGR013W</name>
</gene>
<reference key="1">
    <citation type="journal article" date="1997" name="Yeast">
        <title>Sequence analysis of 203 kilobases from Saccharomyces cerevisiae chromosome VII.</title>
        <authorList>
            <person name="Rieger M."/>
            <person name="Brueckner M."/>
            <person name="Schaefer M."/>
            <person name="Mueller-Auer S."/>
        </authorList>
    </citation>
    <scope>NUCLEOTIDE SEQUENCE [GENOMIC DNA]</scope>
    <source>
        <strain>ATCC 204508 / S288c</strain>
    </source>
</reference>
<reference key="2">
    <citation type="journal article" date="1997" name="Nature">
        <title>The nucleotide sequence of Saccharomyces cerevisiae chromosome VII.</title>
        <authorList>
            <person name="Tettelin H."/>
            <person name="Agostoni-Carbone M.L."/>
            <person name="Albermann K."/>
            <person name="Albers M."/>
            <person name="Arroyo J."/>
            <person name="Backes U."/>
            <person name="Barreiros T."/>
            <person name="Bertani I."/>
            <person name="Bjourson A.J."/>
            <person name="Brueckner M."/>
            <person name="Bruschi C.V."/>
            <person name="Carignani G."/>
            <person name="Castagnoli L."/>
            <person name="Cerdan E."/>
            <person name="Clemente M.L."/>
            <person name="Coblenz A."/>
            <person name="Coglievina M."/>
            <person name="Coissac E."/>
            <person name="Defoor E."/>
            <person name="Del Bino S."/>
            <person name="Delius H."/>
            <person name="Delneri D."/>
            <person name="de Wergifosse P."/>
            <person name="Dujon B."/>
            <person name="Durand P."/>
            <person name="Entian K.-D."/>
            <person name="Eraso P."/>
            <person name="Escribano V."/>
            <person name="Fabiani L."/>
            <person name="Fartmann B."/>
            <person name="Feroli F."/>
            <person name="Feuermann M."/>
            <person name="Frontali L."/>
            <person name="Garcia-Gonzalez M."/>
            <person name="Garcia-Saez M.I."/>
            <person name="Goffeau A."/>
            <person name="Guerreiro P."/>
            <person name="Hani J."/>
            <person name="Hansen M."/>
            <person name="Hebling U."/>
            <person name="Hernandez K."/>
            <person name="Heumann K."/>
            <person name="Hilger F."/>
            <person name="Hofmann B."/>
            <person name="Indge K.J."/>
            <person name="James C.M."/>
            <person name="Klima R."/>
            <person name="Koetter P."/>
            <person name="Kramer B."/>
            <person name="Kramer W."/>
            <person name="Lauquin G."/>
            <person name="Leuther H."/>
            <person name="Louis E.J."/>
            <person name="Maillier E."/>
            <person name="Marconi A."/>
            <person name="Martegani E."/>
            <person name="Mazon M.J."/>
            <person name="Mazzoni C."/>
            <person name="McReynolds A.D.K."/>
            <person name="Melchioretto P."/>
            <person name="Mewes H.-W."/>
            <person name="Minenkova O."/>
            <person name="Mueller-Auer S."/>
            <person name="Nawrocki A."/>
            <person name="Netter P."/>
            <person name="Neu R."/>
            <person name="Nombela C."/>
            <person name="Oliver S.G."/>
            <person name="Panzeri L."/>
            <person name="Paoluzi S."/>
            <person name="Plevani P."/>
            <person name="Portetelle D."/>
            <person name="Portillo F."/>
            <person name="Potier S."/>
            <person name="Purnelle B."/>
            <person name="Rieger M."/>
            <person name="Riles L."/>
            <person name="Rinaldi T."/>
            <person name="Robben J."/>
            <person name="Rodrigues-Pousada C."/>
            <person name="Rodriguez-Belmonte E."/>
            <person name="Rodriguez-Torres A.M."/>
            <person name="Rose M."/>
            <person name="Ruzzi M."/>
            <person name="Saliola M."/>
            <person name="Sanchez-Perez M."/>
            <person name="Schaefer B."/>
            <person name="Schaefer M."/>
            <person name="Scharfe M."/>
            <person name="Schmidheini T."/>
            <person name="Schreer A."/>
            <person name="Skala J."/>
            <person name="Souciet J.-L."/>
            <person name="Steensma H.Y."/>
            <person name="Talla E."/>
            <person name="Thierry A."/>
            <person name="Vandenbol M."/>
            <person name="van der Aart Q.J.M."/>
            <person name="Van Dyck L."/>
            <person name="Vanoni M."/>
            <person name="Verhasselt P."/>
            <person name="Voet M."/>
            <person name="Volckaert G."/>
            <person name="Wambutt R."/>
            <person name="Watson M.D."/>
            <person name="Weber N."/>
            <person name="Wedler E."/>
            <person name="Wedler H."/>
            <person name="Wipfli P."/>
            <person name="Wolf K."/>
            <person name="Wright L.F."/>
            <person name="Zaccaria P."/>
            <person name="Zimmermann M."/>
            <person name="Zollner A."/>
            <person name="Kleine K."/>
        </authorList>
    </citation>
    <scope>NUCLEOTIDE SEQUENCE [LARGE SCALE GENOMIC DNA]</scope>
    <source>
        <strain>ATCC 204508 / S288c</strain>
    </source>
</reference>
<reference key="3">
    <citation type="journal article" date="2014" name="G3 (Bethesda)">
        <title>The reference genome sequence of Saccharomyces cerevisiae: Then and now.</title>
        <authorList>
            <person name="Engel S.R."/>
            <person name="Dietrich F.S."/>
            <person name="Fisk D.G."/>
            <person name="Binkley G."/>
            <person name="Balakrishnan R."/>
            <person name="Costanzo M.C."/>
            <person name="Dwight S.S."/>
            <person name="Hitz B.C."/>
            <person name="Karra K."/>
            <person name="Nash R.S."/>
            <person name="Weng S."/>
            <person name="Wong E.D."/>
            <person name="Lloyd P."/>
            <person name="Skrzypek M.S."/>
            <person name="Miyasato S.R."/>
            <person name="Simison M."/>
            <person name="Cherry J.M."/>
        </authorList>
    </citation>
    <scope>GENOME REANNOTATION</scope>
    <source>
        <strain>ATCC 204508 / S288c</strain>
    </source>
</reference>
<reference key="4">
    <citation type="journal article" date="1998" name="RNA">
        <title>A comprehensive biochemical and genetic analysis of the yeast U1 snRNP reveals five novel proteins.</title>
        <authorList>
            <person name="Gottschalk A."/>
            <person name="Tang J."/>
            <person name="Puig O."/>
            <person name="Salgado J."/>
            <person name="Neubauer G."/>
            <person name="Colot H.V."/>
            <person name="Mann M."/>
            <person name="Seraphin B."/>
            <person name="Rosbash M."/>
            <person name="Luehrmann R."/>
            <person name="Fabrizio P."/>
        </authorList>
    </citation>
    <scope>PROTEIN SEQUENCE OF 26-38; 104-128; 191-197; 232-240; 451-461; 468-479; 505-549 AND 597-613</scope>
    <scope>IDENTIFICATION IN U1 SNRNP COMPLEX</scope>
</reference>
<reference key="5">
    <citation type="journal article" date="1999" name="Nat. Biotechnol.">
        <title>A generic protein purification method for protein complex characterization and proteome exploration.</title>
        <authorList>
            <person name="Rigaut G."/>
            <person name="Shevchenko A."/>
            <person name="Rutz B."/>
            <person name="Wilm M."/>
            <person name="Mann M."/>
            <person name="Seraphin B."/>
        </authorList>
    </citation>
    <scope>IDENTIFICATION IN U1 SNRNP COMPLEX</scope>
    <scope>IDENTIFICATION BY MASS SPECTROMETRY</scope>
</reference>
<reference key="6">
    <citation type="journal article" date="2002" name="J. Biol. Chem.">
        <title>A role for the Psi-U mismatch in the recognition of the 5' splice site of yeast introns by the U1 small nuclear ribonucleoprotein particle.</title>
        <authorList>
            <person name="Libri D."/>
            <person name="Duconge F."/>
            <person name="Levy L."/>
            <person name="Vinauger M."/>
        </authorList>
    </citation>
    <scope>FUNCTION OF THE U1 SNRNP COMPLEX</scope>
</reference>
<reference key="7">
    <citation type="journal article" date="2002" name="Mol. Cell">
        <title>Composition and functional characterization of the yeast spliceosomal penta-snRNP.</title>
        <authorList>
            <person name="Stevens S.W."/>
            <person name="Ryan D.E."/>
            <person name="Ge H.Y."/>
            <person name="Moore R.E."/>
            <person name="Young M.K."/>
            <person name="Lee T.D."/>
            <person name="Abelson J."/>
        </authorList>
    </citation>
    <scope>IDENTIFICATION IN U1.U2.U4/U6.U5 PENTA-SNRNP COMPLEX</scope>
    <scope>IDENTIFICATION BY MASS SPECTROMETRY</scope>
</reference>
<reference key="8">
    <citation type="journal article" date="2003" name="Nature">
        <title>Global analysis of protein localization in budding yeast.</title>
        <authorList>
            <person name="Huh W.-K."/>
            <person name="Falvo J.V."/>
            <person name="Gerke L.C."/>
            <person name="Carroll A.S."/>
            <person name="Howson R.W."/>
            <person name="Weissman J.S."/>
            <person name="O'Shea E.K."/>
        </authorList>
    </citation>
    <scope>SUBCELLULAR LOCATION [LARGE SCALE ANALYSIS]</scope>
</reference>
<reference key="9">
    <citation type="journal article" date="2003" name="Nature">
        <title>Global analysis of protein expression in yeast.</title>
        <authorList>
            <person name="Ghaemmaghami S."/>
            <person name="Huh W.-K."/>
            <person name="Bower K."/>
            <person name="Howson R.W."/>
            <person name="Belle A."/>
            <person name="Dephoure N."/>
            <person name="O'Shea E.K."/>
            <person name="Weissman J.S."/>
        </authorList>
    </citation>
    <scope>LEVEL OF PROTEIN EXPRESSION [LARGE SCALE ANALYSIS]</scope>
</reference>
<reference key="10">
    <citation type="journal article" date="2007" name="J. Proteome Res.">
        <title>Large-scale phosphorylation analysis of alpha-factor-arrested Saccharomyces cerevisiae.</title>
        <authorList>
            <person name="Li X."/>
            <person name="Gerber S.A."/>
            <person name="Rudner A.D."/>
            <person name="Beausoleil S.A."/>
            <person name="Haas W."/>
            <person name="Villen J."/>
            <person name="Elias J.E."/>
            <person name="Gygi S.P."/>
        </authorList>
    </citation>
    <scope>PHOSPHORYLATION [LARGE SCALE ANALYSIS] AT SER-512 AND SER-514</scope>
    <scope>IDENTIFICATION BY MASS SPECTROMETRY [LARGE SCALE ANALYSIS]</scope>
    <source>
        <strain>ADR376</strain>
    </source>
</reference>
<dbReference type="EMBL" id="Z72798">
    <property type="protein sequence ID" value="CAA96996.1"/>
    <property type="molecule type" value="Genomic_DNA"/>
</dbReference>
<dbReference type="EMBL" id="BK006941">
    <property type="protein sequence ID" value="DAA08110.1"/>
    <property type="molecule type" value="Genomic_DNA"/>
</dbReference>
<dbReference type="PIR" id="S64304">
    <property type="entry name" value="S64304"/>
</dbReference>
<dbReference type="RefSeq" id="NP_011527.1">
    <property type="nucleotide sequence ID" value="NM_001181142.1"/>
</dbReference>
<dbReference type="PDB" id="5ZWN">
    <property type="method" value="EM"/>
    <property type="resolution" value="3.30 A"/>
    <property type="chains" value="X=1-619"/>
</dbReference>
<dbReference type="PDB" id="6G90">
    <property type="method" value="EM"/>
    <property type="resolution" value="4.00 A"/>
    <property type="chains" value="J=1-620"/>
</dbReference>
<dbReference type="PDB" id="6N7P">
    <property type="method" value="EM"/>
    <property type="resolution" value="3.60 A"/>
    <property type="chains" value="H=1-52"/>
</dbReference>
<dbReference type="PDB" id="6N7R">
    <property type="method" value="EM"/>
    <property type="resolution" value="3.20 A"/>
    <property type="chains" value="H=1-52"/>
</dbReference>
<dbReference type="PDB" id="6N7X">
    <property type="method" value="EM"/>
    <property type="resolution" value="3.60 A"/>
    <property type="chains" value="H=1-620"/>
</dbReference>
<dbReference type="PDB" id="7OQC">
    <property type="method" value="EM"/>
    <property type="resolution" value="4.10 A"/>
    <property type="chains" value="J=1-620"/>
</dbReference>
<dbReference type="PDB" id="7OQE">
    <property type="method" value="EM"/>
    <property type="resolution" value="5.90 A"/>
    <property type="chains" value="J=1-620"/>
</dbReference>
<dbReference type="PDB" id="8W2O">
    <property type="method" value="EM"/>
    <property type="resolution" value="3.49 A"/>
    <property type="chains" value="H=1-52"/>
</dbReference>
<dbReference type="PDBsum" id="5ZWN"/>
<dbReference type="PDBsum" id="6G90"/>
<dbReference type="PDBsum" id="6N7P"/>
<dbReference type="PDBsum" id="6N7R"/>
<dbReference type="PDBsum" id="6N7X"/>
<dbReference type="PDBsum" id="7OQC"/>
<dbReference type="PDBsum" id="7OQE"/>
<dbReference type="PDBsum" id="8W2O"/>
<dbReference type="EMDB" id="EMD-0360"/>
<dbReference type="EMDB" id="EMD-0361"/>
<dbReference type="EMDB" id="EMD-13029"/>
<dbReference type="EMDB" id="EMD-13033"/>
<dbReference type="EMDB" id="EMD-4364"/>
<dbReference type="EMDB" id="EMD-43753"/>
<dbReference type="EMDB" id="EMD-6973"/>
<dbReference type="SMR" id="P53207"/>
<dbReference type="BioGRID" id="33256">
    <property type="interactions" value="119"/>
</dbReference>
<dbReference type="ComplexPortal" id="CPX-23">
    <property type="entry name" value="U1 small nuclear ribonucleoprotein complex"/>
</dbReference>
<dbReference type="DIP" id="DIP-5507N"/>
<dbReference type="FunCoup" id="P53207">
    <property type="interactions" value="222"/>
</dbReference>
<dbReference type="IntAct" id="P53207">
    <property type="interactions" value="24"/>
</dbReference>
<dbReference type="MINT" id="P53207"/>
<dbReference type="STRING" id="4932.YGR013W"/>
<dbReference type="iPTMnet" id="P53207"/>
<dbReference type="PaxDb" id="4932-YGR013W"/>
<dbReference type="PeptideAtlas" id="P53207"/>
<dbReference type="EnsemblFungi" id="YGR013W_mRNA">
    <property type="protein sequence ID" value="YGR013W"/>
    <property type="gene ID" value="YGR013W"/>
</dbReference>
<dbReference type="GeneID" id="852896"/>
<dbReference type="KEGG" id="sce:YGR013W"/>
<dbReference type="AGR" id="SGD:S000003245"/>
<dbReference type="SGD" id="S000003245">
    <property type="gene designation" value="SNU71"/>
</dbReference>
<dbReference type="VEuPathDB" id="FungiDB:YGR013W"/>
<dbReference type="eggNOG" id="KOG2253">
    <property type="taxonomic scope" value="Eukaryota"/>
</dbReference>
<dbReference type="HOGENOM" id="CLU_031562_0_0_1"/>
<dbReference type="InParanoid" id="P53207"/>
<dbReference type="OMA" id="YDHHRSF"/>
<dbReference type="OrthoDB" id="6275295at2759"/>
<dbReference type="BioCyc" id="YEAST:G3O-30740-MONOMER"/>
<dbReference type="BioGRID-ORCS" id="852896">
    <property type="hits" value="4 hits in 10 CRISPR screens"/>
</dbReference>
<dbReference type="PRO" id="PR:P53207"/>
<dbReference type="Proteomes" id="UP000002311">
    <property type="component" value="Chromosome VII"/>
</dbReference>
<dbReference type="RNAct" id="P53207">
    <property type="molecule type" value="protein"/>
</dbReference>
<dbReference type="GO" id="GO:0000243">
    <property type="term" value="C:commitment complex"/>
    <property type="evidence" value="ECO:0000303"/>
    <property type="project" value="ComplexPortal"/>
</dbReference>
<dbReference type="GO" id="GO:0005737">
    <property type="term" value="C:cytoplasm"/>
    <property type="evidence" value="ECO:0007669"/>
    <property type="project" value="UniProtKB-SubCell"/>
</dbReference>
<dbReference type="GO" id="GO:0005634">
    <property type="term" value="C:nucleus"/>
    <property type="evidence" value="ECO:0000303"/>
    <property type="project" value="ComplexPortal"/>
</dbReference>
<dbReference type="GO" id="GO:0005681">
    <property type="term" value="C:spliceosomal complex"/>
    <property type="evidence" value="ECO:0000303"/>
    <property type="project" value="ComplexPortal"/>
</dbReference>
<dbReference type="GO" id="GO:0005685">
    <property type="term" value="C:U1 snRNP"/>
    <property type="evidence" value="ECO:0000314"/>
    <property type="project" value="SGD"/>
</dbReference>
<dbReference type="GO" id="GO:0071004">
    <property type="term" value="C:U2-type prespliceosome"/>
    <property type="evidence" value="ECO:0000314"/>
    <property type="project" value="SGD"/>
</dbReference>
<dbReference type="GO" id="GO:0003723">
    <property type="term" value="F:RNA binding"/>
    <property type="evidence" value="ECO:0000314"/>
    <property type="project" value="SGD"/>
</dbReference>
<dbReference type="GO" id="GO:0000395">
    <property type="term" value="P:mRNA 5'-splice site recognition"/>
    <property type="evidence" value="ECO:0000303"/>
    <property type="project" value="ComplexPortal"/>
</dbReference>
<dbReference type="GO" id="GO:0000398">
    <property type="term" value="P:mRNA splicing, via spliceosome"/>
    <property type="evidence" value="ECO:0000314"/>
    <property type="project" value="SGD"/>
</dbReference>
<dbReference type="Gene3D" id="1.20.1390.10">
    <property type="entry name" value="PWI domain"/>
    <property type="match status" value="1"/>
</dbReference>
<dbReference type="InterPro" id="IPR002483">
    <property type="entry name" value="PWI_dom"/>
</dbReference>
<dbReference type="Pfam" id="PF24826">
    <property type="entry name" value="SNU71_N"/>
    <property type="match status" value="1"/>
</dbReference>
<dbReference type="Pfam" id="PF24825">
    <property type="entry name" value="SNU71_RBD"/>
    <property type="match status" value="1"/>
</dbReference>
<dbReference type="SMART" id="SM00311">
    <property type="entry name" value="PWI"/>
    <property type="match status" value="1"/>
</dbReference>
<evidence type="ECO:0000255" key="1"/>
<evidence type="ECO:0000256" key="2">
    <source>
        <dbReference type="SAM" id="MobiDB-lite"/>
    </source>
</evidence>
<evidence type="ECO:0000269" key="3">
    <source>
    </source>
</evidence>
<evidence type="ECO:0000269" key="4">
    <source>
    </source>
</evidence>
<evidence type="ECO:0000269" key="5">
    <source>
    </source>
</evidence>
<evidence type="ECO:0000269" key="6">
    <source>
    </source>
</evidence>
<evidence type="ECO:0000269" key="7">
    <source>
    </source>
</evidence>
<evidence type="ECO:0000269" key="8">
    <source>
    </source>
</evidence>
<evidence type="ECO:0000305" key="9"/>
<evidence type="ECO:0007744" key="10">
    <source>
    </source>
</evidence>
<evidence type="ECO:0007829" key="11">
    <source>
        <dbReference type="PDB" id="6N7R"/>
    </source>
</evidence>
<feature type="chain" id="PRO_0000202781" description="U1 small nuclear ribonucleoprotein component SNU71">
    <location>
        <begin position="1"/>
        <end position="620"/>
    </location>
</feature>
<feature type="region of interest" description="Disordered" evidence="2">
    <location>
        <begin position="59"/>
        <end position="82"/>
    </location>
</feature>
<feature type="region of interest" description="Disordered" evidence="2">
    <location>
        <begin position="246"/>
        <end position="270"/>
    </location>
</feature>
<feature type="region of interest" description="Disordered" evidence="2">
    <location>
        <begin position="323"/>
        <end position="373"/>
    </location>
</feature>
<feature type="region of interest" description="Disordered" evidence="2">
    <location>
        <begin position="428"/>
        <end position="452"/>
    </location>
</feature>
<feature type="region of interest" description="Disordered" evidence="2">
    <location>
        <begin position="509"/>
        <end position="537"/>
    </location>
</feature>
<feature type="coiled-coil region" evidence="1">
    <location>
        <begin position="296"/>
        <end position="385"/>
    </location>
</feature>
<feature type="compositionally biased region" description="Polar residues" evidence="2">
    <location>
        <begin position="59"/>
        <end position="75"/>
    </location>
</feature>
<feature type="compositionally biased region" description="Basic and acidic residues" evidence="2">
    <location>
        <begin position="246"/>
        <end position="256"/>
    </location>
</feature>
<feature type="compositionally biased region" description="Polar residues" evidence="2">
    <location>
        <begin position="258"/>
        <end position="270"/>
    </location>
</feature>
<feature type="compositionally biased region" description="Acidic residues" evidence="2">
    <location>
        <begin position="335"/>
        <end position="355"/>
    </location>
</feature>
<feature type="compositionally biased region" description="Basic and acidic residues" evidence="2">
    <location>
        <begin position="356"/>
        <end position="373"/>
    </location>
</feature>
<feature type="compositionally biased region" description="Basic and acidic residues" evidence="2">
    <location>
        <begin position="431"/>
        <end position="445"/>
    </location>
</feature>
<feature type="compositionally biased region" description="Basic and acidic residues" evidence="2">
    <location>
        <begin position="517"/>
        <end position="537"/>
    </location>
</feature>
<feature type="modified residue" description="Phosphoserine" evidence="10">
    <location>
        <position position="512"/>
    </location>
</feature>
<feature type="modified residue" description="Phosphoserine" evidence="10">
    <location>
        <position position="514"/>
    </location>
</feature>
<feature type="strand" evidence="11">
    <location>
        <begin position="3"/>
        <end position="7"/>
    </location>
</feature>
<feature type="helix" evidence="11">
    <location>
        <begin position="9"/>
        <end position="13"/>
    </location>
</feature>
<feature type="strand" evidence="11">
    <location>
        <begin position="20"/>
        <end position="23"/>
    </location>
</feature>
<feature type="strand" evidence="11">
    <location>
        <begin position="29"/>
        <end position="33"/>
    </location>
</feature>
<feature type="helix" evidence="11">
    <location>
        <begin position="36"/>
        <end position="42"/>
    </location>
</feature>
<feature type="helix" evidence="11">
    <location>
        <begin position="44"/>
        <end position="51"/>
    </location>
</feature>
<keyword id="KW-0002">3D-structure</keyword>
<keyword id="KW-0175">Coiled coil</keyword>
<keyword id="KW-0963">Cytoplasm</keyword>
<keyword id="KW-0903">Direct protein sequencing</keyword>
<keyword id="KW-0507">mRNA processing</keyword>
<keyword id="KW-0508">mRNA splicing</keyword>
<keyword id="KW-0539">Nucleus</keyword>
<keyword id="KW-0597">Phosphoprotein</keyword>
<keyword id="KW-1185">Reference proteome</keyword>
<keyword id="KW-0687">Ribonucleoprotein</keyword>
<keyword id="KW-0694">RNA-binding</keyword>
<keyword id="KW-0747">Spliceosome</keyword>
<organism>
    <name type="scientific">Saccharomyces cerevisiae (strain ATCC 204508 / S288c)</name>
    <name type="common">Baker's yeast</name>
    <dbReference type="NCBI Taxonomy" id="559292"/>
    <lineage>
        <taxon>Eukaryota</taxon>
        <taxon>Fungi</taxon>
        <taxon>Dikarya</taxon>
        <taxon>Ascomycota</taxon>
        <taxon>Saccharomycotina</taxon>
        <taxon>Saccharomycetes</taxon>
        <taxon>Saccharomycetales</taxon>
        <taxon>Saccharomycetaceae</taxon>
        <taxon>Saccharomyces</taxon>
    </lineage>
</organism>